<accession>A1SJJ3</accession>
<sequence length="477" mass="52669">MSKVLTSLPVGQRVGIAFSGGLDTSVAVAWMRDKGAIPCTYTADIGQYDEPDVSGVPARAREYGAEIARVVDCRAQLVEEGLAALACGAFHIRSGGRIYFNTTPLGRAVTGTILVRAMHEDGVDIWGDGSTFKGNDIERFYRYGLLANPQLRIYKPWLDPDFVHELGGRTEMSQWLTSHGLPYRDSQEKAYSTDANIWGATHEAKTLEHLDTSLEVVTPIMGVRFWDPAVDIATEDVTVAFEQGRPVALNGRRFDDPVELVEEANAIGGRHGLGMSDQIENRIIEAKSRGVYEAPGMALLWLTYERLMNAIHNEDTLANYQISGRRLGRLLYEGRWLDPQALMLRESIQRWVASVVTGEVTVRLRRGEDYTIVRTEGPALSYHPEKLSMERTSNSAFGPTDRIGQLTMRNLDIADSRAMLEMYAGQPLDQGQVLVENGTLFGELPSGGFDQITENPEVQAEPEEEALDAAAMEAGTD</sequence>
<dbReference type="EC" id="6.3.4.5" evidence="1"/>
<dbReference type="EMBL" id="CP000509">
    <property type="protein sequence ID" value="ABL81978.1"/>
    <property type="molecule type" value="Genomic_DNA"/>
</dbReference>
<dbReference type="RefSeq" id="WP_011755919.1">
    <property type="nucleotide sequence ID" value="NC_008699.1"/>
</dbReference>
<dbReference type="SMR" id="A1SJJ3"/>
<dbReference type="STRING" id="196162.Noca_2474"/>
<dbReference type="KEGG" id="nca:Noca_2474"/>
<dbReference type="eggNOG" id="COG0137">
    <property type="taxonomic scope" value="Bacteria"/>
</dbReference>
<dbReference type="HOGENOM" id="CLU_032784_4_1_11"/>
<dbReference type="OrthoDB" id="9801641at2"/>
<dbReference type="UniPathway" id="UPA00068">
    <property type="reaction ID" value="UER00113"/>
</dbReference>
<dbReference type="Proteomes" id="UP000000640">
    <property type="component" value="Chromosome"/>
</dbReference>
<dbReference type="GO" id="GO:0005737">
    <property type="term" value="C:cytoplasm"/>
    <property type="evidence" value="ECO:0007669"/>
    <property type="project" value="UniProtKB-SubCell"/>
</dbReference>
<dbReference type="GO" id="GO:0004055">
    <property type="term" value="F:argininosuccinate synthase activity"/>
    <property type="evidence" value="ECO:0007669"/>
    <property type="project" value="UniProtKB-UniRule"/>
</dbReference>
<dbReference type="GO" id="GO:0005524">
    <property type="term" value="F:ATP binding"/>
    <property type="evidence" value="ECO:0007669"/>
    <property type="project" value="UniProtKB-UniRule"/>
</dbReference>
<dbReference type="GO" id="GO:0042803">
    <property type="term" value="F:protein homodimerization activity"/>
    <property type="evidence" value="ECO:0007669"/>
    <property type="project" value="InterPro"/>
</dbReference>
<dbReference type="GO" id="GO:0000053">
    <property type="term" value="P:argininosuccinate metabolic process"/>
    <property type="evidence" value="ECO:0007669"/>
    <property type="project" value="TreeGrafter"/>
</dbReference>
<dbReference type="GO" id="GO:0006526">
    <property type="term" value="P:L-arginine biosynthetic process"/>
    <property type="evidence" value="ECO:0007669"/>
    <property type="project" value="UniProtKB-UniRule"/>
</dbReference>
<dbReference type="GO" id="GO:0000050">
    <property type="term" value="P:urea cycle"/>
    <property type="evidence" value="ECO:0007669"/>
    <property type="project" value="TreeGrafter"/>
</dbReference>
<dbReference type="CDD" id="cd01999">
    <property type="entry name" value="ASS"/>
    <property type="match status" value="1"/>
</dbReference>
<dbReference type="Gene3D" id="1.10.287.400">
    <property type="match status" value="1"/>
</dbReference>
<dbReference type="Gene3D" id="3.90.1260.10">
    <property type="entry name" value="Argininosuccinate synthetase, chain A, domain 2"/>
    <property type="match status" value="1"/>
</dbReference>
<dbReference type="Gene3D" id="3.40.50.620">
    <property type="entry name" value="HUPs"/>
    <property type="match status" value="1"/>
</dbReference>
<dbReference type="HAMAP" id="MF_00581">
    <property type="entry name" value="Arg_succ_synth_type2"/>
    <property type="match status" value="1"/>
</dbReference>
<dbReference type="InterPro" id="IPR023437">
    <property type="entry name" value="Arg_succ_synth_type2_subfam"/>
</dbReference>
<dbReference type="InterPro" id="IPR048268">
    <property type="entry name" value="Arginosuc_syn_C"/>
</dbReference>
<dbReference type="InterPro" id="IPR048267">
    <property type="entry name" value="Arginosuc_syn_N"/>
</dbReference>
<dbReference type="InterPro" id="IPR001518">
    <property type="entry name" value="Arginosuc_synth"/>
</dbReference>
<dbReference type="InterPro" id="IPR018223">
    <property type="entry name" value="Arginosuc_synth_CS"/>
</dbReference>
<dbReference type="InterPro" id="IPR023434">
    <property type="entry name" value="Arginosuc_synth_type_1_subfam"/>
</dbReference>
<dbReference type="InterPro" id="IPR024074">
    <property type="entry name" value="AS_cat/multimer_dom_body"/>
</dbReference>
<dbReference type="InterPro" id="IPR024073">
    <property type="entry name" value="AS_multimer_C_tail"/>
</dbReference>
<dbReference type="InterPro" id="IPR014729">
    <property type="entry name" value="Rossmann-like_a/b/a_fold"/>
</dbReference>
<dbReference type="NCBIfam" id="TIGR00032">
    <property type="entry name" value="argG"/>
    <property type="match status" value="1"/>
</dbReference>
<dbReference type="NCBIfam" id="NF003779">
    <property type="entry name" value="PRK05370.1"/>
    <property type="match status" value="1"/>
</dbReference>
<dbReference type="PANTHER" id="PTHR11587">
    <property type="entry name" value="ARGININOSUCCINATE SYNTHASE"/>
    <property type="match status" value="1"/>
</dbReference>
<dbReference type="PANTHER" id="PTHR11587:SF2">
    <property type="entry name" value="ARGININOSUCCINATE SYNTHASE"/>
    <property type="match status" value="1"/>
</dbReference>
<dbReference type="Pfam" id="PF20979">
    <property type="entry name" value="Arginosuc_syn_C"/>
    <property type="match status" value="1"/>
</dbReference>
<dbReference type="Pfam" id="PF00764">
    <property type="entry name" value="Arginosuc_synth"/>
    <property type="match status" value="1"/>
</dbReference>
<dbReference type="SUPFAM" id="SSF52402">
    <property type="entry name" value="Adenine nucleotide alpha hydrolases-like"/>
    <property type="match status" value="1"/>
</dbReference>
<dbReference type="SUPFAM" id="SSF69864">
    <property type="entry name" value="Argininosuccinate synthetase, C-terminal domain"/>
    <property type="match status" value="1"/>
</dbReference>
<dbReference type="PROSITE" id="PS00564">
    <property type="entry name" value="ARGININOSUCCIN_SYN_1"/>
    <property type="match status" value="1"/>
</dbReference>
<dbReference type="PROSITE" id="PS00565">
    <property type="entry name" value="ARGININOSUCCIN_SYN_2"/>
    <property type="match status" value="1"/>
</dbReference>
<organism>
    <name type="scientific">Nocardioides sp. (strain ATCC BAA-499 / JS614)</name>
    <dbReference type="NCBI Taxonomy" id="196162"/>
    <lineage>
        <taxon>Bacteria</taxon>
        <taxon>Bacillati</taxon>
        <taxon>Actinomycetota</taxon>
        <taxon>Actinomycetes</taxon>
        <taxon>Propionibacteriales</taxon>
        <taxon>Nocardioidaceae</taxon>
        <taxon>Nocardioides</taxon>
    </lineage>
</organism>
<feature type="chain" id="PRO_1000025435" description="Argininosuccinate synthase">
    <location>
        <begin position="1"/>
        <end position="477"/>
    </location>
</feature>
<feature type="region of interest" description="Disordered" evidence="2">
    <location>
        <begin position="450"/>
        <end position="477"/>
    </location>
</feature>
<feature type="compositionally biased region" description="Low complexity" evidence="2">
    <location>
        <begin position="468"/>
        <end position="477"/>
    </location>
</feature>
<feature type="binding site" evidence="1">
    <location>
        <begin position="17"/>
        <end position="25"/>
    </location>
    <ligand>
        <name>ATP</name>
        <dbReference type="ChEBI" id="CHEBI:30616"/>
    </ligand>
</feature>
<feature type="binding site" evidence="1">
    <location>
        <position position="43"/>
    </location>
    <ligand>
        <name>ATP</name>
        <dbReference type="ChEBI" id="CHEBI:30616"/>
    </ligand>
</feature>
<feature type="binding site" evidence="1">
    <location>
        <position position="99"/>
    </location>
    <ligand>
        <name>L-citrulline</name>
        <dbReference type="ChEBI" id="CHEBI:57743"/>
    </ligand>
</feature>
<feature type="binding site" evidence="1">
    <location>
        <position position="129"/>
    </location>
    <ligand>
        <name>ATP</name>
        <dbReference type="ChEBI" id="CHEBI:30616"/>
    </ligand>
</feature>
<feature type="binding site" evidence="1">
    <location>
        <position position="131"/>
    </location>
    <ligand>
        <name>ATP</name>
        <dbReference type="ChEBI" id="CHEBI:30616"/>
    </ligand>
</feature>
<feature type="binding site" evidence="1">
    <location>
        <position position="131"/>
    </location>
    <ligand>
        <name>L-aspartate</name>
        <dbReference type="ChEBI" id="CHEBI:29991"/>
    </ligand>
</feature>
<feature type="binding site" evidence="1">
    <location>
        <position position="135"/>
    </location>
    <ligand>
        <name>L-aspartate</name>
        <dbReference type="ChEBI" id="CHEBI:29991"/>
    </ligand>
</feature>
<feature type="binding site" evidence="1">
    <location>
        <position position="135"/>
    </location>
    <ligand>
        <name>L-citrulline</name>
        <dbReference type="ChEBI" id="CHEBI:57743"/>
    </ligand>
</feature>
<feature type="binding site" evidence="1">
    <location>
        <position position="136"/>
    </location>
    <ligand>
        <name>ATP</name>
        <dbReference type="ChEBI" id="CHEBI:30616"/>
    </ligand>
</feature>
<feature type="binding site" evidence="1">
    <location>
        <position position="136"/>
    </location>
    <ligand>
        <name>L-aspartate</name>
        <dbReference type="ChEBI" id="CHEBI:29991"/>
    </ligand>
</feature>
<feature type="binding site" evidence="1">
    <location>
        <position position="139"/>
    </location>
    <ligand>
        <name>L-citrulline</name>
        <dbReference type="ChEBI" id="CHEBI:57743"/>
    </ligand>
</feature>
<feature type="binding site" evidence="1">
    <location>
        <position position="192"/>
    </location>
    <ligand>
        <name>L-citrulline</name>
        <dbReference type="ChEBI" id="CHEBI:57743"/>
    </ligand>
</feature>
<feature type="binding site" evidence="1">
    <location>
        <position position="194"/>
    </location>
    <ligand>
        <name>ATP</name>
        <dbReference type="ChEBI" id="CHEBI:30616"/>
    </ligand>
</feature>
<feature type="binding site" evidence="1">
    <location>
        <position position="201"/>
    </location>
    <ligand>
        <name>L-citrulline</name>
        <dbReference type="ChEBI" id="CHEBI:57743"/>
    </ligand>
</feature>
<feature type="binding site" evidence="1">
    <location>
        <position position="203"/>
    </location>
    <ligand>
        <name>L-citrulline</name>
        <dbReference type="ChEBI" id="CHEBI:57743"/>
    </ligand>
</feature>
<feature type="binding site" evidence="1">
    <location>
        <position position="280"/>
    </location>
    <ligand>
        <name>L-citrulline</name>
        <dbReference type="ChEBI" id="CHEBI:57743"/>
    </ligand>
</feature>
<reference key="1">
    <citation type="submission" date="2006-12" db="EMBL/GenBank/DDBJ databases">
        <title>Complete sequence of chromosome 1 of Nocardioides sp. JS614.</title>
        <authorList>
            <person name="Copeland A."/>
            <person name="Lucas S."/>
            <person name="Lapidus A."/>
            <person name="Barry K."/>
            <person name="Detter J.C."/>
            <person name="Glavina del Rio T."/>
            <person name="Hammon N."/>
            <person name="Israni S."/>
            <person name="Dalin E."/>
            <person name="Tice H."/>
            <person name="Pitluck S."/>
            <person name="Thompson L.S."/>
            <person name="Brettin T."/>
            <person name="Bruce D."/>
            <person name="Han C."/>
            <person name="Tapia R."/>
            <person name="Schmutz J."/>
            <person name="Larimer F."/>
            <person name="Land M."/>
            <person name="Hauser L."/>
            <person name="Kyrpides N."/>
            <person name="Kim E."/>
            <person name="Mattes T."/>
            <person name="Gossett J."/>
            <person name="Richardson P."/>
        </authorList>
    </citation>
    <scope>NUCLEOTIDE SEQUENCE [LARGE SCALE GENOMIC DNA]</scope>
    <source>
        <strain>ATCC BAA-499 / JS614</strain>
    </source>
</reference>
<evidence type="ECO:0000255" key="1">
    <source>
        <dbReference type="HAMAP-Rule" id="MF_00581"/>
    </source>
</evidence>
<evidence type="ECO:0000256" key="2">
    <source>
        <dbReference type="SAM" id="MobiDB-lite"/>
    </source>
</evidence>
<gene>
    <name evidence="1" type="primary">argG</name>
    <name type="ordered locus">Noca_2474</name>
</gene>
<proteinExistence type="inferred from homology"/>
<comment type="catalytic activity">
    <reaction evidence="1">
        <text>L-citrulline + L-aspartate + ATP = 2-(N(omega)-L-arginino)succinate + AMP + diphosphate + H(+)</text>
        <dbReference type="Rhea" id="RHEA:10932"/>
        <dbReference type="ChEBI" id="CHEBI:15378"/>
        <dbReference type="ChEBI" id="CHEBI:29991"/>
        <dbReference type="ChEBI" id="CHEBI:30616"/>
        <dbReference type="ChEBI" id="CHEBI:33019"/>
        <dbReference type="ChEBI" id="CHEBI:57472"/>
        <dbReference type="ChEBI" id="CHEBI:57743"/>
        <dbReference type="ChEBI" id="CHEBI:456215"/>
        <dbReference type="EC" id="6.3.4.5"/>
    </reaction>
</comment>
<comment type="pathway">
    <text evidence="1">Amino-acid biosynthesis; L-arginine biosynthesis; L-arginine from L-ornithine and carbamoyl phosphate: step 2/3.</text>
</comment>
<comment type="subunit">
    <text evidence="1">Homotetramer.</text>
</comment>
<comment type="subcellular location">
    <subcellularLocation>
        <location evidence="1">Cytoplasm</location>
    </subcellularLocation>
</comment>
<comment type="similarity">
    <text evidence="1">Belongs to the argininosuccinate synthase family. Type 2 subfamily.</text>
</comment>
<keyword id="KW-0028">Amino-acid biosynthesis</keyword>
<keyword id="KW-0055">Arginine biosynthesis</keyword>
<keyword id="KW-0067">ATP-binding</keyword>
<keyword id="KW-0963">Cytoplasm</keyword>
<keyword id="KW-0436">Ligase</keyword>
<keyword id="KW-0547">Nucleotide-binding</keyword>
<keyword id="KW-1185">Reference proteome</keyword>
<protein>
    <recommendedName>
        <fullName evidence="1">Argininosuccinate synthase</fullName>
        <ecNumber evidence="1">6.3.4.5</ecNumber>
    </recommendedName>
    <alternativeName>
        <fullName evidence="1">Citrulline--aspartate ligase</fullName>
    </alternativeName>
</protein>
<name>ASSY_NOCSJ</name>